<sequence length="164" mass="17586">MALNLQDKKAIVAEVNEAASGALSAVVADSRGVTVGAMTSLRKQAREAGVYMRVVRNTLARRAVEGTQYECLQDTFTGPSLLAFSNEHPGAAARLFKDFAKENKNFEIKAAAFEGAVTDADVLATLPTYDEAIARLMMCMKEASAGKLVRTIAAVRDQKEEAEA</sequence>
<comment type="function">
    <text evidence="1">Forms part of the ribosomal stalk, playing a central role in the interaction of the ribosome with GTP-bound translation factors.</text>
</comment>
<comment type="subunit">
    <text evidence="1">Part of the ribosomal stalk of the 50S ribosomal subunit. The N-terminus interacts with L11 and the large rRNA to form the base of the stalk. The C-terminus forms an elongated spine to which L12 dimers bind in a sequential fashion forming a multimeric L10(L12)X complex.</text>
</comment>
<comment type="similarity">
    <text evidence="1">Belongs to the universal ribosomal protein uL10 family.</text>
</comment>
<reference key="1">
    <citation type="journal article" date="2008" name="BMC Genomics">
        <title>The genome sequence of the fish pathogen Aliivibrio salmonicida strain LFI1238 shows extensive evidence of gene decay.</title>
        <authorList>
            <person name="Hjerde E."/>
            <person name="Lorentzen M.S."/>
            <person name="Holden M.T."/>
            <person name="Seeger K."/>
            <person name="Paulsen S."/>
            <person name="Bason N."/>
            <person name="Churcher C."/>
            <person name="Harris D."/>
            <person name="Norbertczak H."/>
            <person name="Quail M.A."/>
            <person name="Sanders S."/>
            <person name="Thurston S."/>
            <person name="Parkhill J."/>
            <person name="Willassen N.P."/>
            <person name="Thomson N.R."/>
        </authorList>
    </citation>
    <scope>NUCLEOTIDE SEQUENCE [LARGE SCALE GENOMIC DNA]</scope>
    <source>
        <strain>LFI1238</strain>
    </source>
</reference>
<accession>B6ENR5</accession>
<protein>
    <recommendedName>
        <fullName evidence="1">Large ribosomal subunit protein uL10</fullName>
    </recommendedName>
    <alternativeName>
        <fullName evidence="2">50S ribosomal protein L10</fullName>
    </alternativeName>
</protein>
<feature type="chain" id="PRO_1000120908" description="Large ribosomal subunit protein uL10">
    <location>
        <begin position="1"/>
        <end position="164"/>
    </location>
</feature>
<gene>
    <name evidence="1" type="primary">rplJ</name>
    <name type="ordered locus">VSAL_I2868</name>
</gene>
<organism>
    <name type="scientific">Aliivibrio salmonicida (strain LFI1238)</name>
    <name type="common">Vibrio salmonicida (strain LFI1238)</name>
    <dbReference type="NCBI Taxonomy" id="316275"/>
    <lineage>
        <taxon>Bacteria</taxon>
        <taxon>Pseudomonadati</taxon>
        <taxon>Pseudomonadota</taxon>
        <taxon>Gammaproteobacteria</taxon>
        <taxon>Vibrionales</taxon>
        <taxon>Vibrionaceae</taxon>
        <taxon>Aliivibrio</taxon>
    </lineage>
</organism>
<evidence type="ECO:0000255" key="1">
    <source>
        <dbReference type="HAMAP-Rule" id="MF_00362"/>
    </source>
</evidence>
<evidence type="ECO:0000305" key="2"/>
<name>RL10_ALISL</name>
<proteinExistence type="inferred from homology"/>
<dbReference type="EMBL" id="FM178379">
    <property type="protein sequence ID" value="CAQ80552.1"/>
    <property type="molecule type" value="Genomic_DNA"/>
</dbReference>
<dbReference type="RefSeq" id="WP_012551290.1">
    <property type="nucleotide sequence ID" value="NC_011312.1"/>
</dbReference>
<dbReference type="KEGG" id="vsa:VSAL_I2868"/>
<dbReference type="eggNOG" id="COG0244">
    <property type="taxonomic scope" value="Bacteria"/>
</dbReference>
<dbReference type="HOGENOM" id="CLU_092227_0_2_6"/>
<dbReference type="Proteomes" id="UP000001730">
    <property type="component" value="Chromosome 1"/>
</dbReference>
<dbReference type="GO" id="GO:0015934">
    <property type="term" value="C:large ribosomal subunit"/>
    <property type="evidence" value="ECO:0007669"/>
    <property type="project" value="InterPro"/>
</dbReference>
<dbReference type="GO" id="GO:0070180">
    <property type="term" value="F:large ribosomal subunit rRNA binding"/>
    <property type="evidence" value="ECO:0007669"/>
    <property type="project" value="UniProtKB-UniRule"/>
</dbReference>
<dbReference type="GO" id="GO:0003735">
    <property type="term" value="F:structural constituent of ribosome"/>
    <property type="evidence" value="ECO:0007669"/>
    <property type="project" value="InterPro"/>
</dbReference>
<dbReference type="GO" id="GO:0006412">
    <property type="term" value="P:translation"/>
    <property type="evidence" value="ECO:0007669"/>
    <property type="project" value="UniProtKB-UniRule"/>
</dbReference>
<dbReference type="CDD" id="cd05797">
    <property type="entry name" value="Ribosomal_L10"/>
    <property type="match status" value="1"/>
</dbReference>
<dbReference type="FunFam" id="3.30.70.1730:FF:000001">
    <property type="entry name" value="50S ribosomal protein L10"/>
    <property type="match status" value="1"/>
</dbReference>
<dbReference type="Gene3D" id="3.30.70.1730">
    <property type="match status" value="1"/>
</dbReference>
<dbReference type="Gene3D" id="6.10.250.2350">
    <property type="match status" value="1"/>
</dbReference>
<dbReference type="HAMAP" id="MF_00362">
    <property type="entry name" value="Ribosomal_uL10"/>
    <property type="match status" value="1"/>
</dbReference>
<dbReference type="InterPro" id="IPR001790">
    <property type="entry name" value="Ribosomal_uL10"/>
</dbReference>
<dbReference type="InterPro" id="IPR043141">
    <property type="entry name" value="Ribosomal_uL10-like_sf"/>
</dbReference>
<dbReference type="InterPro" id="IPR022973">
    <property type="entry name" value="Ribosomal_uL10_bac"/>
</dbReference>
<dbReference type="InterPro" id="IPR047865">
    <property type="entry name" value="Ribosomal_uL10_bac_type"/>
</dbReference>
<dbReference type="InterPro" id="IPR002363">
    <property type="entry name" value="Ribosomal_uL10_CS_bac"/>
</dbReference>
<dbReference type="NCBIfam" id="NF000955">
    <property type="entry name" value="PRK00099.1-1"/>
    <property type="match status" value="1"/>
</dbReference>
<dbReference type="PANTHER" id="PTHR11560">
    <property type="entry name" value="39S RIBOSOMAL PROTEIN L10, MITOCHONDRIAL"/>
    <property type="match status" value="1"/>
</dbReference>
<dbReference type="Pfam" id="PF00466">
    <property type="entry name" value="Ribosomal_L10"/>
    <property type="match status" value="1"/>
</dbReference>
<dbReference type="SUPFAM" id="SSF160369">
    <property type="entry name" value="Ribosomal protein L10-like"/>
    <property type="match status" value="1"/>
</dbReference>
<dbReference type="PROSITE" id="PS01109">
    <property type="entry name" value="RIBOSOMAL_L10"/>
    <property type="match status" value="1"/>
</dbReference>
<keyword id="KW-0687">Ribonucleoprotein</keyword>
<keyword id="KW-0689">Ribosomal protein</keyword>
<keyword id="KW-0694">RNA-binding</keyword>
<keyword id="KW-0699">rRNA-binding</keyword>